<sequence length="230" mass="26291">MIKAILTDIEGTTTPISFVKDVLFPYSYEKIEEFVKNNLQNPQVQKIIEDVKKEINKSDASLEEVIENLKSWIVEDKKITPLKELQGLIWEEGYKSGKLQGFVYPDAYNKLKEWFDSGIKIFIYSSGSVKAQKLLFSNTNYGDLNYLFSGYFDTNIGNKKDKQSYVKIAKEIGFSPSEILFLSDNPDEIIAAASAGYNVIRLVRPLDADHIDNFPYKQVESFDEIEIGRV</sequence>
<dbReference type="EC" id="3.1.3.77" evidence="1"/>
<dbReference type="EMBL" id="CP001080">
    <property type="protein sequence ID" value="ACD65890.1"/>
    <property type="molecule type" value="Genomic_DNA"/>
</dbReference>
<dbReference type="RefSeq" id="WP_012458979.1">
    <property type="nucleotide sequence ID" value="NC_010730.1"/>
</dbReference>
<dbReference type="SMR" id="B2V7G7"/>
<dbReference type="STRING" id="436114.SYO3AOP1_0245"/>
<dbReference type="KEGG" id="sul:SYO3AOP1_0245"/>
<dbReference type="eggNOG" id="COG4229">
    <property type="taxonomic scope" value="Bacteria"/>
</dbReference>
<dbReference type="HOGENOM" id="CLU_023273_0_0_0"/>
<dbReference type="UniPathway" id="UPA00904">
    <property type="reaction ID" value="UER00876"/>
</dbReference>
<dbReference type="UniPathway" id="UPA00904">
    <property type="reaction ID" value="UER00877"/>
</dbReference>
<dbReference type="GO" id="GO:0043715">
    <property type="term" value="F:2,3-diketo-5-methylthiopentyl-1-phosphate enolase activity"/>
    <property type="evidence" value="ECO:0007669"/>
    <property type="project" value="UniProtKB-UniRule"/>
</dbReference>
<dbReference type="GO" id="GO:0043716">
    <property type="term" value="F:2-hydroxy-3-keto-5-methylthiopentenyl-1-phosphate phosphatase activity"/>
    <property type="evidence" value="ECO:0007669"/>
    <property type="project" value="UniProtKB-UniRule"/>
</dbReference>
<dbReference type="GO" id="GO:0043874">
    <property type="term" value="F:acireductone synthase activity"/>
    <property type="evidence" value="ECO:0007669"/>
    <property type="project" value="UniProtKB-EC"/>
</dbReference>
<dbReference type="GO" id="GO:0000287">
    <property type="term" value="F:magnesium ion binding"/>
    <property type="evidence" value="ECO:0007669"/>
    <property type="project" value="UniProtKB-UniRule"/>
</dbReference>
<dbReference type="GO" id="GO:0019509">
    <property type="term" value="P:L-methionine salvage from methylthioadenosine"/>
    <property type="evidence" value="ECO:0007669"/>
    <property type="project" value="UniProtKB-UniRule"/>
</dbReference>
<dbReference type="CDD" id="cd01629">
    <property type="entry name" value="HAD_EP"/>
    <property type="match status" value="1"/>
</dbReference>
<dbReference type="Gene3D" id="1.10.720.60">
    <property type="match status" value="1"/>
</dbReference>
<dbReference type="Gene3D" id="3.40.50.1000">
    <property type="entry name" value="HAD superfamily/HAD-like"/>
    <property type="match status" value="1"/>
</dbReference>
<dbReference type="HAMAP" id="MF_01681">
    <property type="entry name" value="Salvage_MtnC"/>
    <property type="match status" value="1"/>
</dbReference>
<dbReference type="InterPro" id="IPR023943">
    <property type="entry name" value="Enolase-ppase_E1"/>
</dbReference>
<dbReference type="InterPro" id="IPR036412">
    <property type="entry name" value="HAD-like_sf"/>
</dbReference>
<dbReference type="InterPro" id="IPR006439">
    <property type="entry name" value="HAD-SF_hydro_IA"/>
</dbReference>
<dbReference type="InterPro" id="IPR023214">
    <property type="entry name" value="HAD_sf"/>
</dbReference>
<dbReference type="NCBIfam" id="TIGR01691">
    <property type="entry name" value="enolase-ppase"/>
    <property type="match status" value="1"/>
</dbReference>
<dbReference type="NCBIfam" id="TIGR01549">
    <property type="entry name" value="HAD-SF-IA-v1"/>
    <property type="match status" value="1"/>
</dbReference>
<dbReference type="PANTHER" id="PTHR20371">
    <property type="entry name" value="ENOLASE-PHOSPHATASE E1"/>
    <property type="match status" value="1"/>
</dbReference>
<dbReference type="PANTHER" id="PTHR20371:SF1">
    <property type="entry name" value="ENOLASE-PHOSPHATASE E1"/>
    <property type="match status" value="1"/>
</dbReference>
<dbReference type="Pfam" id="PF00702">
    <property type="entry name" value="Hydrolase"/>
    <property type="match status" value="1"/>
</dbReference>
<dbReference type="SFLD" id="SFLDG01129">
    <property type="entry name" value="C1.5:_HAD__Beta-PGM__Phosphata"/>
    <property type="match status" value="1"/>
</dbReference>
<dbReference type="SFLD" id="SFLDF00044">
    <property type="entry name" value="enolase-phosphatase"/>
    <property type="match status" value="1"/>
</dbReference>
<dbReference type="SUPFAM" id="SSF56784">
    <property type="entry name" value="HAD-like"/>
    <property type="match status" value="1"/>
</dbReference>
<name>MTNC_SULSY</name>
<keyword id="KW-0028">Amino-acid biosynthesis</keyword>
<keyword id="KW-0378">Hydrolase</keyword>
<keyword id="KW-0460">Magnesium</keyword>
<keyword id="KW-0479">Metal-binding</keyword>
<keyword id="KW-0486">Methionine biosynthesis</keyword>
<proteinExistence type="inferred from homology"/>
<accession>B2V7G7</accession>
<gene>
    <name evidence="1" type="primary">mtnC</name>
    <name type="ordered locus">SYO3AOP1_0245</name>
</gene>
<feature type="chain" id="PRO_0000357417" description="Enolase-phosphatase E1">
    <location>
        <begin position="1"/>
        <end position="230"/>
    </location>
</feature>
<evidence type="ECO:0000255" key="1">
    <source>
        <dbReference type="HAMAP-Rule" id="MF_01681"/>
    </source>
</evidence>
<organism>
    <name type="scientific">Sulfurihydrogenibium sp. (strain YO3AOP1)</name>
    <dbReference type="NCBI Taxonomy" id="436114"/>
    <lineage>
        <taxon>Bacteria</taxon>
        <taxon>Pseudomonadati</taxon>
        <taxon>Aquificota</taxon>
        <taxon>Aquificia</taxon>
        <taxon>Aquificales</taxon>
        <taxon>Hydrogenothermaceae</taxon>
        <taxon>Sulfurihydrogenibium</taxon>
    </lineage>
</organism>
<comment type="function">
    <text evidence="1">Bifunctional enzyme that catalyzes the enolization of 2,3-diketo-5-methylthiopentyl-1-phosphate (DK-MTP-1-P) into the intermediate 2-hydroxy-3-keto-5-methylthiopentenyl-1-phosphate (HK-MTPenyl-1-P), which is then dephosphorylated to form the acireductone 1,2-dihydroxy-3-keto-5-methylthiopentene (DHK-MTPene).</text>
</comment>
<comment type="catalytic activity">
    <reaction evidence="1">
        <text>5-methylsulfanyl-2,3-dioxopentyl phosphate + H2O = 1,2-dihydroxy-5-(methylsulfanyl)pent-1-en-3-one + phosphate</text>
        <dbReference type="Rhea" id="RHEA:21700"/>
        <dbReference type="ChEBI" id="CHEBI:15377"/>
        <dbReference type="ChEBI" id="CHEBI:43474"/>
        <dbReference type="ChEBI" id="CHEBI:49252"/>
        <dbReference type="ChEBI" id="CHEBI:58828"/>
        <dbReference type="EC" id="3.1.3.77"/>
    </reaction>
</comment>
<comment type="cofactor">
    <cofactor evidence="1">
        <name>Mg(2+)</name>
        <dbReference type="ChEBI" id="CHEBI:18420"/>
    </cofactor>
    <text evidence="1">Binds 1 Mg(2+) ion per subunit.</text>
</comment>
<comment type="pathway">
    <text evidence="1">Amino-acid biosynthesis; L-methionine biosynthesis via salvage pathway; L-methionine from S-methyl-5-thio-alpha-D-ribose 1-phosphate: step 3/6.</text>
</comment>
<comment type="pathway">
    <text evidence="1">Amino-acid biosynthesis; L-methionine biosynthesis via salvage pathway; L-methionine from S-methyl-5-thio-alpha-D-ribose 1-phosphate: step 4/6.</text>
</comment>
<comment type="subunit">
    <text evidence="1">Monomer.</text>
</comment>
<comment type="similarity">
    <text evidence="1">Belongs to the HAD-like hydrolase superfamily. MasA/MtnC family.</text>
</comment>
<reference key="1">
    <citation type="journal article" date="2009" name="J. Bacteriol.">
        <title>Complete and draft genome sequences of six members of the Aquificales.</title>
        <authorList>
            <person name="Reysenbach A.-L."/>
            <person name="Hamamura N."/>
            <person name="Podar M."/>
            <person name="Griffiths E."/>
            <person name="Ferreira S."/>
            <person name="Hochstein R."/>
            <person name="Heidelberg J."/>
            <person name="Johnson J."/>
            <person name="Mead D."/>
            <person name="Pohorille A."/>
            <person name="Sarmiento M."/>
            <person name="Schweighofer K."/>
            <person name="Seshadri R."/>
            <person name="Voytek M.A."/>
        </authorList>
    </citation>
    <scope>NUCLEOTIDE SEQUENCE [LARGE SCALE GENOMIC DNA]</scope>
    <source>
        <strain>YO3AOP1</strain>
    </source>
</reference>
<protein>
    <recommendedName>
        <fullName evidence="1">Enolase-phosphatase E1</fullName>
        <ecNumber evidence="1">3.1.3.77</ecNumber>
    </recommendedName>
    <alternativeName>
        <fullName evidence="1">2,3-diketo-5-methylthio-1-phosphopentane phosphatase</fullName>
    </alternativeName>
</protein>